<accession>Q0MQI4</accession>
<keyword id="KW-0004">4Fe-4S</keyword>
<keyword id="KW-0007">Acetylation</keyword>
<keyword id="KW-0249">Electron transport</keyword>
<keyword id="KW-0285">Flavoprotein</keyword>
<keyword id="KW-0288">FMN</keyword>
<keyword id="KW-0408">Iron</keyword>
<keyword id="KW-0411">Iron-sulfur</keyword>
<keyword id="KW-0472">Membrane</keyword>
<keyword id="KW-0479">Metal-binding</keyword>
<keyword id="KW-0488">Methylation</keyword>
<keyword id="KW-0496">Mitochondrion</keyword>
<keyword id="KW-0999">Mitochondrion inner membrane</keyword>
<keyword id="KW-0520">NAD</keyword>
<keyword id="KW-0560">Oxidoreductase</keyword>
<keyword id="KW-0679">Respiratory chain</keyword>
<keyword id="KW-0809">Transit peptide</keyword>
<keyword id="KW-1278">Translocase</keyword>
<keyword id="KW-0813">Transport</keyword>
<keyword id="KW-0830">Ubiquinone</keyword>
<comment type="function">
    <text evidence="3">Core subunit of the mitochondrial membrane respiratory chain NADH dehydrogenase (Complex I) which catalyzes electron transfer from NADH through the respiratory chain, using ubiquinone as an electron acceptor. Part of the peripheral arm of the enzyme, where the electrons from NADH are accepted by flavin mononucleotide (FMN) and then passed along a chain of iron-sulfur clusters by electron tunnelling to the final acceptor ubiquinone. Contains FMN, which is the initial electron acceptor as well as one iron-sulfur cluster.</text>
</comment>
<comment type="catalytic activity">
    <reaction evidence="3">
        <text>a ubiquinone + NADH + 5 H(+)(in) = a ubiquinol + NAD(+) + 4 H(+)(out)</text>
        <dbReference type="Rhea" id="RHEA:29091"/>
        <dbReference type="Rhea" id="RHEA-COMP:9565"/>
        <dbReference type="Rhea" id="RHEA-COMP:9566"/>
        <dbReference type="ChEBI" id="CHEBI:15378"/>
        <dbReference type="ChEBI" id="CHEBI:16389"/>
        <dbReference type="ChEBI" id="CHEBI:17976"/>
        <dbReference type="ChEBI" id="CHEBI:57540"/>
        <dbReference type="ChEBI" id="CHEBI:57945"/>
        <dbReference type="EC" id="7.1.1.2"/>
    </reaction>
    <physiologicalReaction direction="left-to-right" evidence="3">
        <dbReference type="Rhea" id="RHEA:29092"/>
    </physiologicalReaction>
</comment>
<comment type="cofactor">
    <cofactor evidence="3">
        <name>FMN</name>
        <dbReference type="ChEBI" id="CHEBI:58210"/>
    </cofactor>
    <text evidence="3">Binds 1 FMN.</text>
</comment>
<comment type="cofactor">
    <cofactor evidence="3">
        <name>[4Fe-4S] cluster</name>
        <dbReference type="ChEBI" id="CHEBI:49883"/>
    </cofactor>
    <text evidence="3">Binds 1 [4Fe-4S] cluster.</text>
</comment>
<comment type="subunit">
    <text evidence="3">Core subunit of respiratory chain NADH dehydrogenase (Complex I) which is composed of 45 different subunits (By similarity). This is a component of the flavoprotein-sulfur (FP) fragment of the enzyme (By similarity). Interacts with RAB5IF (By similarity).</text>
</comment>
<comment type="subcellular location">
    <subcellularLocation>
        <location evidence="2">Mitochondrion inner membrane</location>
        <topology evidence="2">Peripheral membrane protein</topology>
        <orientation evidence="2">Matrix side</orientation>
    </subcellularLocation>
</comment>
<comment type="similarity">
    <text evidence="6">Belongs to the complex I 51 kDa subunit family.</text>
</comment>
<sequence length="464" mass="50727">MLAARRLLGWSLPARVSVRFSGDTTAPKKTSFGSLKDEDRIFTNLYGRHDWRLKGALSRGDWYKTKEILLKGPDWILGEIKTSGLRGRGGAGFPTGLKWSFMNKPSDGRPKYLVVNADEGEPGTCKDREIIRHDPHKLVEGCLVGGRAMGARAAYIYIRGEFYNEASNLQVAIREAYEAGLIGKNACGSGYDFDVFVVRGAGAYICGEETALIESIEGKQGKPRLKPPFPADVGVFGCPTTVANVETVAVSPTICRRGGTWFAGFGRERNSGTKLFNISGHVNYPCTVEEEMSVPLKELIEKHAGGVTGGWDNLLAVIPGGSSTPLIPKSVCETVLMDFDALVQAQTGLGTAAVIVMDRSTDIVKAIARLIEFYKHESCGQCTPCREGVDWMNKVMARFVRGDAQPAEIDSLWEISKQIEGHTICALGDGAAWPVQGLIRHFRPELEERMQRFAQQHQAQQAAS</sequence>
<feature type="transit peptide" description="Mitochondrion" evidence="5">
    <location>
        <begin position="1"/>
        <end position="20"/>
    </location>
</feature>
<feature type="chain" id="PRO_0000251878" description="NADH dehydrogenase [ubiquinone] flavoprotein 1, mitochondrial">
    <location>
        <begin position="21"/>
        <end position="464"/>
    </location>
</feature>
<feature type="binding site" evidence="1">
    <location>
        <begin position="87"/>
        <end position="96"/>
    </location>
    <ligand>
        <name>NADH</name>
        <dbReference type="ChEBI" id="CHEBI:57945"/>
    </ligand>
</feature>
<feature type="binding site" evidence="1">
    <location>
        <begin position="199"/>
        <end position="247"/>
    </location>
    <ligand>
        <name>FMN</name>
        <dbReference type="ChEBI" id="CHEBI:58210"/>
    </ligand>
</feature>
<feature type="binding site" evidence="3">
    <location>
        <position position="379"/>
    </location>
    <ligand>
        <name>[4Fe-4S] cluster</name>
        <dbReference type="ChEBI" id="CHEBI:49883"/>
    </ligand>
</feature>
<feature type="binding site" evidence="3">
    <location>
        <position position="382"/>
    </location>
    <ligand>
        <name>[4Fe-4S] cluster</name>
        <dbReference type="ChEBI" id="CHEBI:49883"/>
    </ligand>
</feature>
<feature type="binding site" evidence="3">
    <location>
        <position position="385"/>
    </location>
    <ligand>
        <name>[4Fe-4S] cluster</name>
        <dbReference type="ChEBI" id="CHEBI:49883"/>
    </ligand>
</feature>
<feature type="binding site" evidence="3">
    <location>
        <position position="425"/>
    </location>
    <ligand>
        <name>[4Fe-4S] cluster</name>
        <dbReference type="ChEBI" id="CHEBI:49883"/>
    </ligand>
</feature>
<feature type="modified residue" description="N6-acetyllysine; alternate" evidence="4">
    <location>
        <position position="81"/>
    </location>
</feature>
<feature type="modified residue" description="N6-succinyllysine; alternate" evidence="4">
    <location>
        <position position="81"/>
    </location>
</feature>
<feature type="modified residue" description="N6-acetyllysine" evidence="4">
    <location>
        <position position="104"/>
    </location>
</feature>
<feature type="modified residue" description="Omega-N-methylarginine" evidence="4">
    <location>
        <position position="257"/>
    </location>
</feature>
<feature type="modified residue" description="N6-acetyllysine" evidence="4">
    <location>
        <position position="375"/>
    </location>
</feature>
<protein>
    <recommendedName>
        <fullName>NADH dehydrogenase [ubiquinone] flavoprotein 1, mitochondrial</fullName>
        <ecNumber evidence="3">7.1.1.2</ecNumber>
    </recommendedName>
    <alternativeName>
        <fullName>Complex I-51kD</fullName>
        <shortName>CI-51kD</shortName>
    </alternativeName>
    <alternativeName>
        <fullName evidence="3">NADH-ubiquinone oxidoreductase 51 kDa subunit</fullName>
    </alternativeName>
</protein>
<organism>
    <name type="scientific">Pongo pygmaeus</name>
    <name type="common">Bornean orangutan</name>
    <dbReference type="NCBI Taxonomy" id="9600"/>
    <lineage>
        <taxon>Eukaryota</taxon>
        <taxon>Metazoa</taxon>
        <taxon>Chordata</taxon>
        <taxon>Craniata</taxon>
        <taxon>Vertebrata</taxon>
        <taxon>Euteleostomi</taxon>
        <taxon>Mammalia</taxon>
        <taxon>Eutheria</taxon>
        <taxon>Euarchontoglires</taxon>
        <taxon>Primates</taxon>
        <taxon>Haplorrhini</taxon>
        <taxon>Catarrhini</taxon>
        <taxon>Hominidae</taxon>
        <taxon>Pongo</taxon>
    </lineage>
</organism>
<evidence type="ECO:0000250" key="1"/>
<evidence type="ECO:0000250" key="2">
    <source>
        <dbReference type="UniProtKB" id="P25708"/>
    </source>
</evidence>
<evidence type="ECO:0000250" key="3">
    <source>
        <dbReference type="UniProtKB" id="P49821"/>
    </source>
</evidence>
<evidence type="ECO:0000250" key="4">
    <source>
        <dbReference type="UniProtKB" id="Q91YT0"/>
    </source>
</evidence>
<evidence type="ECO:0000255" key="5"/>
<evidence type="ECO:0000305" key="6"/>
<reference key="1">
    <citation type="journal article" date="2006" name="Gene">
        <title>Adaptive selection of mitochondrial complex I subunits during primate radiation.</title>
        <authorList>
            <person name="Mishmar D."/>
            <person name="Ruiz-Pesini E."/>
            <person name="Mondragon-Palomino M."/>
            <person name="Procaccio V."/>
            <person name="Gaut B."/>
            <person name="Wallace D.C."/>
        </authorList>
    </citation>
    <scope>NUCLEOTIDE SEQUENCE [MRNA]</scope>
</reference>
<proteinExistence type="evidence at transcript level"/>
<name>NDUV1_PONPY</name>
<dbReference type="EC" id="7.1.1.2" evidence="3"/>
<dbReference type="EMBL" id="DQ885650">
    <property type="protein sequence ID" value="ABH12159.1"/>
    <property type="molecule type" value="mRNA"/>
</dbReference>
<dbReference type="RefSeq" id="XP_054294806.1">
    <property type="nucleotide sequence ID" value="XM_054438831.2"/>
</dbReference>
<dbReference type="SMR" id="Q0MQI4"/>
<dbReference type="GeneID" id="129007675"/>
<dbReference type="GO" id="GO:0005743">
    <property type="term" value="C:mitochondrial inner membrane"/>
    <property type="evidence" value="ECO:0000250"/>
    <property type="project" value="UniProtKB"/>
</dbReference>
<dbReference type="GO" id="GO:0045271">
    <property type="term" value="C:respiratory chain complex I"/>
    <property type="evidence" value="ECO:0000250"/>
    <property type="project" value="UniProtKB"/>
</dbReference>
<dbReference type="GO" id="GO:0051539">
    <property type="term" value="F:4 iron, 4 sulfur cluster binding"/>
    <property type="evidence" value="ECO:0007669"/>
    <property type="project" value="UniProtKB-KW"/>
</dbReference>
<dbReference type="GO" id="GO:0010181">
    <property type="term" value="F:FMN binding"/>
    <property type="evidence" value="ECO:0007669"/>
    <property type="project" value="InterPro"/>
</dbReference>
<dbReference type="GO" id="GO:0046872">
    <property type="term" value="F:metal ion binding"/>
    <property type="evidence" value="ECO:0007669"/>
    <property type="project" value="UniProtKB-KW"/>
</dbReference>
<dbReference type="GO" id="GO:0051287">
    <property type="term" value="F:NAD binding"/>
    <property type="evidence" value="ECO:0007669"/>
    <property type="project" value="InterPro"/>
</dbReference>
<dbReference type="GO" id="GO:0008137">
    <property type="term" value="F:NADH dehydrogenase (ubiquinone) activity"/>
    <property type="evidence" value="ECO:0000250"/>
    <property type="project" value="UniProtKB"/>
</dbReference>
<dbReference type="GO" id="GO:0006120">
    <property type="term" value="P:mitochondrial electron transport, NADH to ubiquinone"/>
    <property type="evidence" value="ECO:0000250"/>
    <property type="project" value="UniProtKB"/>
</dbReference>
<dbReference type="FunFam" id="1.20.1440.230:FF:000001">
    <property type="entry name" value="Mitochondrial NADH dehydrogenase flavoprotein 1"/>
    <property type="match status" value="1"/>
</dbReference>
<dbReference type="FunFam" id="3.10.20.600:FF:000001">
    <property type="entry name" value="NADH dehydrogenase [ubiquinone] flavoprotein 1, mitochondrial"/>
    <property type="match status" value="1"/>
</dbReference>
<dbReference type="FunFam" id="3.40.50.11540:FF:000001">
    <property type="entry name" value="NADH dehydrogenase [ubiquinone] flavoprotein 1, mitochondrial"/>
    <property type="match status" value="1"/>
</dbReference>
<dbReference type="Gene3D" id="3.10.20.600">
    <property type="match status" value="1"/>
</dbReference>
<dbReference type="Gene3D" id="3.40.50.11540">
    <property type="entry name" value="NADH-ubiquinone oxidoreductase 51kDa subunit"/>
    <property type="match status" value="1"/>
</dbReference>
<dbReference type="Gene3D" id="1.20.1440.230">
    <property type="entry name" value="NADH-ubiquinone oxidoreductase 51kDa subunit, iron-sulphur binding domain"/>
    <property type="match status" value="1"/>
</dbReference>
<dbReference type="InterPro" id="IPR050837">
    <property type="entry name" value="ComplexI_51kDa_subunit"/>
</dbReference>
<dbReference type="InterPro" id="IPR001949">
    <property type="entry name" value="NADH-UbQ_OxRdtase_51kDa_CS"/>
</dbReference>
<dbReference type="InterPro" id="IPR011537">
    <property type="entry name" value="NADH-UbQ_OxRdtase_suF"/>
</dbReference>
<dbReference type="InterPro" id="IPR011538">
    <property type="entry name" value="Nuo51_FMN-bd"/>
</dbReference>
<dbReference type="InterPro" id="IPR037225">
    <property type="entry name" value="Nuo51_FMN-bd_sf"/>
</dbReference>
<dbReference type="InterPro" id="IPR019575">
    <property type="entry name" value="Nuop51_4Fe4S-bd"/>
</dbReference>
<dbReference type="InterPro" id="IPR037207">
    <property type="entry name" value="Nuop51_4Fe4S-bd_sf"/>
</dbReference>
<dbReference type="InterPro" id="IPR054765">
    <property type="entry name" value="SLBB_dom"/>
</dbReference>
<dbReference type="NCBIfam" id="TIGR01959">
    <property type="entry name" value="nuoF_fam"/>
    <property type="match status" value="1"/>
</dbReference>
<dbReference type="NCBIfam" id="NF010120">
    <property type="entry name" value="PRK13596.1"/>
    <property type="match status" value="1"/>
</dbReference>
<dbReference type="PANTHER" id="PTHR11780:SF10">
    <property type="entry name" value="NADH DEHYDROGENASE [UBIQUINONE] FLAVOPROTEIN 1, MITOCHONDRIAL"/>
    <property type="match status" value="1"/>
</dbReference>
<dbReference type="PANTHER" id="PTHR11780">
    <property type="entry name" value="NADH-UBIQUINONE OXIDOREDUCTASE FLAVOPROTEIN 1 NDUFV1"/>
    <property type="match status" value="1"/>
</dbReference>
<dbReference type="Pfam" id="PF01512">
    <property type="entry name" value="Complex1_51K"/>
    <property type="match status" value="1"/>
</dbReference>
<dbReference type="Pfam" id="PF10589">
    <property type="entry name" value="NADH_4Fe-4S"/>
    <property type="match status" value="1"/>
</dbReference>
<dbReference type="Pfam" id="PF22461">
    <property type="entry name" value="SLBB_2"/>
    <property type="match status" value="1"/>
</dbReference>
<dbReference type="SMART" id="SM00928">
    <property type="entry name" value="NADH_4Fe-4S"/>
    <property type="match status" value="1"/>
</dbReference>
<dbReference type="SUPFAM" id="SSF142019">
    <property type="entry name" value="Nqo1 FMN-binding domain-like"/>
    <property type="match status" value="1"/>
</dbReference>
<dbReference type="SUPFAM" id="SSF142984">
    <property type="entry name" value="Nqo1 middle domain-like"/>
    <property type="match status" value="1"/>
</dbReference>
<dbReference type="SUPFAM" id="SSF140490">
    <property type="entry name" value="Nqo1C-terminal domain-like"/>
    <property type="match status" value="1"/>
</dbReference>
<dbReference type="PROSITE" id="PS00644">
    <property type="entry name" value="COMPLEX1_51K_1"/>
    <property type="match status" value="1"/>
</dbReference>
<dbReference type="PROSITE" id="PS00645">
    <property type="entry name" value="COMPLEX1_51K_2"/>
    <property type="match status" value="1"/>
</dbReference>
<gene>
    <name evidence="3" type="primary">NDUFV1</name>
</gene>